<evidence type="ECO:0000255" key="1">
    <source>
        <dbReference type="HAMAP-Rule" id="MF_01333"/>
    </source>
</evidence>
<evidence type="ECO:0000305" key="2"/>
<gene>
    <name evidence="1" type="primary">rplE</name>
    <name type="ordered locus">PputGB1_0496</name>
</gene>
<dbReference type="EMBL" id="CP000926">
    <property type="protein sequence ID" value="ABY96407.1"/>
    <property type="molecule type" value="Genomic_DNA"/>
</dbReference>
<dbReference type="RefSeq" id="WP_003255474.1">
    <property type="nucleotide sequence ID" value="NC_010322.1"/>
</dbReference>
<dbReference type="SMR" id="B0KK79"/>
<dbReference type="GeneID" id="93675534"/>
<dbReference type="KEGG" id="ppg:PputGB1_0496"/>
<dbReference type="eggNOG" id="COG0094">
    <property type="taxonomic scope" value="Bacteria"/>
</dbReference>
<dbReference type="HOGENOM" id="CLU_061015_2_1_6"/>
<dbReference type="Proteomes" id="UP000002157">
    <property type="component" value="Chromosome"/>
</dbReference>
<dbReference type="GO" id="GO:1990904">
    <property type="term" value="C:ribonucleoprotein complex"/>
    <property type="evidence" value="ECO:0007669"/>
    <property type="project" value="UniProtKB-KW"/>
</dbReference>
<dbReference type="GO" id="GO:0005840">
    <property type="term" value="C:ribosome"/>
    <property type="evidence" value="ECO:0007669"/>
    <property type="project" value="UniProtKB-KW"/>
</dbReference>
<dbReference type="GO" id="GO:0019843">
    <property type="term" value="F:rRNA binding"/>
    <property type="evidence" value="ECO:0007669"/>
    <property type="project" value="UniProtKB-UniRule"/>
</dbReference>
<dbReference type="GO" id="GO:0003735">
    <property type="term" value="F:structural constituent of ribosome"/>
    <property type="evidence" value="ECO:0007669"/>
    <property type="project" value="InterPro"/>
</dbReference>
<dbReference type="GO" id="GO:0000049">
    <property type="term" value="F:tRNA binding"/>
    <property type="evidence" value="ECO:0007669"/>
    <property type="project" value="UniProtKB-UniRule"/>
</dbReference>
<dbReference type="GO" id="GO:0006412">
    <property type="term" value="P:translation"/>
    <property type="evidence" value="ECO:0007669"/>
    <property type="project" value="UniProtKB-UniRule"/>
</dbReference>
<dbReference type="FunFam" id="3.30.1440.10:FF:000001">
    <property type="entry name" value="50S ribosomal protein L5"/>
    <property type="match status" value="1"/>
</dbReference>
<dbReference type="Gene3D" id="3.30.1440.10">
    <property type="match status" value="1"/>
</dbReference>
<dbReference type="HAMAP" id="MF_01333_B">
    <property type="entry name" value="Ribosomal_uL5_B"/>
    <property type="match status" value="1"/>
</dbReference>
<dbReference type="InterPro" id="IPR002132">
    <property type="entry name" value="Ribosomal_uL5"/>
</dbReference>
<dbReference type="InterPro" id="IPR020930">
    <property type="entry name" value="Ribosomal_uL5_bac-type"/>
</dbReference>
<dbReference type="InterPro" id="IPR031309">
    <property type="entry name" value="Ribosomal_uL5_C"/>
</dbReference>
<dbReference type="InterPro" id="IPR020929">
    <property type="entry name" value="Ribosomal_uL5_CS"/>
</dbReference>
<dbReference type="InterPro" id="IPR022803">
    <property type="entry name" value="Ribosomal_uL5_dom_sf"/>
</dbReference>
<dbReference type="InterPro" id="IPR031310">
    <property type="entry name" value="Ribosomal_uL5_N"/>
</dbReference>
<dbReference type="NCBIfam" id="NF000585">
    <property type="entry name" value="PRK00010.1"/>
    <property type="match status" value="1"/>
</dbReference>
<dbReference type="PANTHER" id="PTHR11994">
    <property type="entry name" value="60S RIBOSOMAL PROTEIN L11-RELATED"/>
    <property type="match status" value="1"/>
</dbReference>
<dbReference type="Pfam" id="PF00281">
    <property type="entry name" value="Ribosomal_L5"/>
    <property type="match status" value="1"/>
</dbReference>
<dbReference type="Pfam" id="PF00673">
    <property type="entry name" value="Ribosomal_L5_C"/>
    <property type="match status" value="1"/>
</dbReference>
<dbReference type="PIRSF" id="PIRSF002161">
    <property type="entry name" value="Ribosomal_L5"/>
    <property type="match status" value="1"/>
</dbReference>
<dbReference type="SUPFAM" id="SSF55282">
    <property type="entry name" value="RL5-like"/>
    <property type="match status" value="1"/>
</dbReference>
<dbReference type="PROSITE" id="PS00358">
    <property type="entry name" value="RIBOSOMAL_L5"/>
    <property type="match status" value="1"/>
</dbReference>
<sequence length="179" mass="20329">MARLKEIYRNEIAPKLKEELKLSNVMEVPRVTKITLNMGLGEAIGDKKVIEHAVADLEKITGQKPVVTFARKSIAGFKVREGWPIGVKVTLRSDKMYEFLDRLLAISLPRVRDFRGLNAKSFDGRGNYSMGVKEQIIFPEIDYDKIDALRGLDITLTTTARSDDEGRALLRAFKFPFRN</sequence>
<comment type="function">
    <text evidence="1">This is one of the proteins that bind and probably mediate the attachment of the 5S RNA into the large ribosomal subunit, where it forms part of the central protuberance. In the 70S ribosome it contacts protein S13 of the 30S subunit (bridge B1b), connecting the 2 subunits; this bridge is implicated in subunit movement. Contacts the P site tRNA; the 5S rRNA and some of its associated proteins might help stabilize positioning of ribosome-bound tRNAs.</text>
</comment>
<comment type="subunit">
    <text evidence="1">Part of the 50S ribosomal subunit; part of the 5S rRNA/L5/L18/L25 subcomplex. Contacts the 5S rRNA and the P site tRNA. Forms a bridge to the 30S subunit in the 70S ribosome.</text>
</comment>
<comment type="similarity">
    <text evidence="1">Belongs to the universal ribosomal protein uL5 family.</text>
</comment>
<name>RL5_PSEPG</name>
<reference key="1">
    <citation type="submission" date="2008-01" db="EMBL/GenBank/DDBJ databases">
        <title>Complete sequence of Pseudomonas putida GB-1.</title>
        <authorList>
            <consortium name="US DOE Joint Genome Institute"/>
            <person name="Copeland A."/>
            <person name="Lucas S."/>
            <person name="Lapidus A."/>
            <person name="Barry K."/>
            <person name="Glavina del Rio T."/>
            <person name="Dalin E."/>
            <person name="Tice H."/>
            <person name="Pitluck S."/>
            <person name="Bruce D."/>
            <person name="Goodwin L."/>
            <person name="Chertkov O."/>
            <person name="Brettin T."/>
            <person name="Detter J.C."/>
            <person name="Han C."/>
            <person name="Kuske C.R."/>
            <person name="Schmutz J."/>
            <person name="Larimer F."/>
            <person name="Land M."/>
            <person name="Hauser L."/>
            <person name="Kyrpides N."/>
            <person name="Kim E."/>
            <person name="McCarthy J.K."/>
            <person name="Richardson P."/>
        </authorList>
    </citation>
    <scope>NUCLEOTIDE SEQUENCE [LARGE SCALE GENOMIC DNA]</scope>
    <source>
        <strain>GB-1</strain>
    </source>
</reference>
<organism>
    <name type="scientific">Pseudomonas putida (strain GB-1)</name>
    <dbReference type="NCBI Taxonomy" id="76869"/>
    <lineage>
        <taxon>Bacteria</taxon>
        <taxon>Pseudomonadati</taxon>
        <taxon>Pseudomonadota</taxon>
        <taxon>Gammaproteobacteria</taxon>
        <taxon>Pseudomonadales</taxon>
        <taxon>Pseudomonadaceae</taxon>
        <taxon>Pseudomonas</taxon>
    </lineage>
</organism>
<keyword id="KW-0687">Ribonucleoprotein</keyword>
<keyword id="KW-0689">Ribosomal protein</keyword>
<keyword id="KW-0694">RNA-binding</keyword>
<keyword id="KW-0699">rRNA-binding</keyword>
<keyword id="KW-0820">tRNA-binding</keyword>
<protein>
    <recommendedName>
        <fullName evidence="1">Large ribosomal subunit protein uL5</fullName>
    </recommendedName>
    <alternativeName>
        <fullName evidence="2">50S ribosomal protein L5</fullName>
    </alternativeName>
</protein>
<accession>B0KK79</accession>
<proteinExistence type="inferred from homology"/>
<feature type="chain" id="PRO_1000086601" description="Large ribosomal subunit protein uL5">
    <location>
        <begin position="1"/>
        <end position="179"/>
    </location>
</feature>